<dbReference type="EMBL" id="AE006914">
    <property type="protein sequence ID" value="AAL03542.1"/>
    <property type="molecule type" value="Genomic_DNA"/>
</dbReference>
<dbReference type="PIR" id="D97825">
    <property type="entry name" value="D97825"/>
</dbReference>
<dbReference type="RefSeq" id="WP_010977586.1">
    <property type="nucleotide sequence ID" value="NC_003103.1"/>
</dbReference>
<dbReference type="SMR" id="Q92GW8"/>
<dbReference type="GeneID" id="928146"/>
<dbReference type="KEGG" id="rco:RC1004"/>
<dbReference type="HOGENOM" id="CLU_037562_3_2_5"/>
<dbReference type="Proteomes" id="UP000000816">
    <property type="component" value="Chromosome"/>
</dbReference>
<dbReference type="GO" id="GO:1990904">
    <property type="term" value="C:ribonucleoprotein complex"/>
    <property type="evidence" value="ECO:0007669"/>
    <property type="project" value="UniProtKB-KW"/>
</dbReference>
<dbReference type="GO" id="GO:0005840">
    <property type="term" value="C:ribosome"/>
    <property type="evidence" value="ECO:0007669"/>
    <property type="project" value="UniProtKB-KW"/>
</dbReference>
<dbReference type="GO" id="GO:0019843">
    <property type="term" value="F:rRNA binding"/>
    <property type="evidence" value="ECO:0007669"/>
    <property type="project" value="UniProtKB-UniRule"/>
</dbReference>
<dbReference type="GO" id="GO:0003735">
    <property type="term" value="F:structural constituent of ribosome"/>
    <property type="evidence" value="ECO:0007669"/>
    <property type="project" value="InterPro"/>
</dbReference>
<dbReference type="GO" id="GO:0006412">
    <property type="term" value="P:translation"/>
    <property type="evidence" value="ECO:0007669"/>
    <property type="project" value="UniProtKB-UniRule"/>
</dbReference>
<dbReference type="FunFam" id="3.30.70.330:FF:000001">
    <property type="entry name" value="50S ribosomal protein L23"/>
    <property type="match status" value="1"/>
</dbReference>
<dbReference type="Gene3D" id="3.30.70.330">
    <property type="match status" value="1"/>
</dbReference>
<dbReference type="HAMAP" id="MF_01369_B">
    <property type="entry name" value="Ribosomal_uL23_B"/>
    <property type="match status" value="1"/>
</dbReference>
<dbReference type="InterPro" id="IPR012677">
    <property type="entry name" value="Nucleotide-bd_a/b_plait_sf"/>
</dbReference>
<dbReference type="InterPro" id="IPR013025">
    <property type="entry name" value="Ribosomal_uL23-like"/>
</dbReference>
<dbReference type="InterPro" id="IPR012678">
    <property type="entry name" value="Ribosomal_uL23/eL15/eS24_sf"/>
</dbReference>
<dbReference type="NCBIfam" id="NF004359">
    <property type="entry name" value="PRK05738.1-3"/>
    <property type="match status" value="1"/>
</dbReference>
<dbReference type="NCBIfam" id="NF004363">
    <property type="entry name" value="PRK05738.2-4"/>
    <property type="match status" value="1"/>
</dbReference>
<dbReference type="PANTHER" id="PTHR11620">
    <property type="entry name" value="60S RIBOSOMAL PROTEIN L23A"/>
    <property type="match status" value="1"/>
</dbReference>
<dbReference type="Pfam" id="PF00276">
    <property type="entry name" value="Ribosomal_L23"/>
    <property type="match status" value="1"/>
</dbReference>
<dbReference type="SUPFAM" id="SSF54189">
    <property type="entry name" value="Ribosomal proteins S24e, L23 and L15e"/>
    <property type="match status" value="1"/>
</dbReference>
<organism>
    <name type="scientific">Rickettsia conorii (strain ATCC VR-613 / Malish 7)</name>
    <dbReference type="NCBI Taxonomy" id="272944"/>
    <lineage>
        <taxon>Bacteria</taxon>
        <taxon>Pseudomonadati</taxon>
        <taxon>Pseudomonadota</taxon>
        <taxon>Alphaproteobacteria</taxon>
        <taxon>Rickettsiales</taxon>
        <taxon>Rickettsiaceae</taxon>
        <taxon>Rickettsieae</taxon>
        <taxon>Rickettsia</taxon>
        <taxon>spotted fever group</taxon>
    </lineage>
</organism>
<comment type="function">
    <text evidence="1">One of the early assembly proteins it binds 23S rRNA. One of the proteins that surrounds the polypeptide exit tunnel on the outside of the ribosome. Forms the main docking site for trigger factor binding to the ribosome.</text>
</comment>
<comment type="subunit">
    <text evidence="1">Part of the 50S ribosomal subunit. Contacts protein L29, and trigger factor when it is bound to the ribosome.</text>
</comment>
<comment type="similarity">
    <text evidence="1">Belongs to the universal ribosomal protein uL23 family.</text>
</comment>
<feature type="chain" id="PRO_0000272829" description="Large ribosomal subunit protein uL23">
    <location>
        <begin position="1"/>
        <end position="98"/>
    </location>
</feature>
<keyword id="KW-0687">Ribonucleoprotein</keyword>
<keyword id="KW-0689">Ribosomal protein</keyword>
<keyword id="KW-0694">RNA-binding</keyword>
<keyword id="KW-0699">rRNA-binding</keyword>
<reference key="1">
    <citation type="journal article" date="2001" name="Science">
        <title>Mechanisms of evolution in Rickettsia conorii and R. prowazekii.</title>
        <authorList>
            <person name="Ogata H."/>
            <person name="Audic S."/>
            <person name="Renesto-Audiffren P."/>
            <person name="Fournier P.-E."/>
            <person name="Barbe V."/>
            <person name="Samson D."/>
            <person name="Roux V."/>
            <person name="Cossart P."/>
            <person name="Weissenbach J."/>
            <person name="Claverie J.-M."/>
            <person name="Raoult D."/>
        </authorList>
    </citation>
    <scope>NUCLEOTIDE SEQUENCE [LARGE SCALE GENOMIC DNA]</scope>
    <source>
        <strain>ATCC VR-613 / Malish 7</strain>
    </source>
</reference>
<name>RL23_RICCN</name>
<evidence type="ECO:0000255" key="1">
    <source>
        <dbReference type="HAMAP-Rule" id="MF_01369"/>
    </source>
</evidence>
<evidence type="ECO:0000305" key="2"/>
<sequence>MSSYKYYDLIRKPIITEKTTTLSEQNKYAFYVDKFAKKLTLKKAIEEIFKVKVKKVNILNVKGKKKRFKGIIGTQINRKKAIVTLEKDHNIDFAGGIK</sequence>
<protein>
    <recommendedName>
        <fullName evidence="1">Large ribosomal subunit protein uL23</fullName>
    </recommendedName>
    <alternativeName>
        <fullName evidence="2">50S ribosomal protein L23</fullName>
    </alternativeName>
</protein>
<proteinExistence type="inferred from homology"/>
<gene>
    <name evidence="1" type="primary">rplW</name>
    <name type="ordered locus">RC1004</name>
</gene>
<accession>Q92GW8</accession>